<organismHost>
    <name type="scientific">Lepidoptera</name>
    <name type="common">butterflies and moths</name>
    <dbReference type="NCBI Taxonomy" id="7088"/>
</organismHost>
<organism>
    <name type="scientific">Autographa californica nuclear polyhedrosis virus</name>
    <name type="common">AcMNPV</name>
    <dbReference type="NCBI Taxonomy" id="46015"/>
    <lineage>
        <taxon>Viruses</taxon>
        <taxon>Viruses incertae sedis</taxon>
        <taxon>Naldaviricetes</taxon>
        <taxon>Lefavirales</taxon>
        <taxon>Baculoviridae</taxon>
        <taxon>Alphabaculovirus</taxon>
        <taxon>Alphabaculovirus aucalifornicae</taxon>
    </lineage>
</organism>
<gene>
    <name type="primary">DA26</name>
</gene>
<keyword id="KW-0244">Early protein</keyword>
<keyword id="KW-1035">Host cytoplasm</keyword>
<keyword id="KW-1043">Host membrane</keyword>
<keyword id="KW-1048">Host nucleus</keyword>
<keyword id="KW-0449">Lipoprotein</keyword>
<keyword id="KW-0472">Membrane</keyword>
<keyword id="KW-0564">Palmitate</keyword>
<keyword id="KW-1185">Reference proteome</keyword>
<keyword id="KW-0946">Virion</keyword>
<evidence type="ECO:0000269" key="1">
    <source>
    </source>
</evidence>
<evidence type="ECO:0000269" key="2">
    <source>
    </source>
</evidence>
<evidence type="ECO:0000269" key="3">
    <source>
    </source>
</evidence>
<evidence type="ECO:0000269" key="4">
    <source>
    </source>
</evidence>
<evidence type="ECO:0000269" key="5">
    <source>
    </source>
</evidence>
<sequence>MESVQTRLCASSNQFAPFKKRQLAVPVGSVNSLTHTITSTTVTSVIPKNYQEKRQKICHIISSLRNTHLNFNKIQSVHKKKLRHLQNLLRKKNEIIAELVRKLESAQKKTTHRNISKPAHWKYFGVVRCDNTIRTIIGNEKFVRRRLAELCTLYNAEYVFCQARADGDKDRQALASLLTAAFGSRVIVYENSRRFEFINPDEIASGKRLIIKHLQDESQSDINAY</sequence>
<reference key="1">
    <citation type="journal article" date="1988" name="J. Virol.">
        <title>Functional mapping of Autographa california nuclear polyhedrosis virus genes required for late gene expression.</title>
        <authorList>
            <person name="Guarino L.A."/>
            <person name="Summers M.D."/>
        </authorList>
    </citation>
    <scope>NUCLEOTIDE SEQUENCE [GENOMIC DNA]</scope>
    <source>
        <strain>E2</strain>
    </source>
</reference>
<reference key="2">
    <citation type="journal article" date="1990" name="J. Gen. Virol.">
        <title>Characterization of the DA26 gene in a hypervariable region of the Autographa californica nuclear polyhedrosis virus genome.</title>
        <authorList>
            <person name="O'Reilly D.R."/>
            <person name="Passarelli A.L."/>
            <person name="Goldman I.F."/>
            <person name="Miller L.K."/>
        </authorList>
    </citation>
    <scope>NUCLEOTIDE SEQUENCE [GENOMIC DNA]</scope>
    <source>
        <strain>L1</strain>
    </source>
</reference>
<reference key="3">
    <citation type="journal article" date="1992" name="Virology">
        <title>Sequence, genomic organization of the EcoRI-A fragment of Autographa californica nuclear polyhedrosis virus, and identification of a viral-encoded protein resembling the outer capsid protein VP8 of rotavirus.</title>
        <authorList>
            <person name="Braunagel S.C."/>
            <person name="Daniel K.D."/>
            <person name="Reilly L.M."/>
            <person name="Guarino L.A."/>
            <person name="Hong T."/>
            <person name="Summers M.D."/>
        </authorList>
    </citation>
    <scope>NUCLEOTIDE SEQUENCE [GENOMIC DNA]</scope>
    <source>
        <strain>E2</strain>
    </source>
</reference>
<reference key="4">
    <citation type="journal article" date="1994" name="Virology">
        <title>The complete DNA sequence of Autographa californica nuclear polyhedrosis virus.</title>
        <authorList>
            <person name="Ayres M.D."/>
            <person name="Howard S.C."/>
            <person name="Kuzio J."/>
            <person name="Lopez-Ferber M."/>
            <person name="Possee R.D."/>
        </authorList>
    </citation>
    <scope>NUCLEOTIDE SEQUENCE [LARGE SCALE GENOMIC DNA]</scope>
    <source>
        <strain>C6</strain>
    </source>
</reference>
<reference key="5">
    <citation type="journal article" date="1998" name="Virology">
        <title>Autographa californica nuclear polyhedrosis virus: subcellular localization and protein trafficking of BV/ODV-E26 to intranuclear membranes and viral envelopes.</title>
        <authorList>
            <person name="Beniya H."/>
            <person name="Braunagel S.C."/>
            <person name="Summers M.D."/>
        </authorList>
    </citation>
    <scope>SUBCELLULAR LOCATION</scope>
    <scope>INTERACTION WITH FP25K</scope>
</reference>
<reference key="6">
    <citation type="journal article" date="2004" name="Proc. Natl. Acad. Sci. U.S.A.">
        <title>Trafficking of ODV-E66 is mediated via a sorting motif and other viral proteins: facilitated trafficking to the inner nuclear membrane.</title>
        <authorList>
            <person name="Braunagel S.C."/>
            <person name="Williamson S.T."/>
            <person name="Saksena S."/>
            <person name="Zhong Z."/>
            <person name="Russell W.K."/>
            <person name="Russell D.H."/>
            <person name="Summers M.D."/>
        </authorList>
    </citation>
    <scope>INTERACTION WITH FP25K</scope>
</reference>
<reference key="7">
    <citation type="journal article" date="2007" name="Virology">
        <title>BV/ODV-E26: a palmitoylated, multifunctional structural protein of Autographa californica nucleopolyhedrovirus.</title>
        <authorList>
            <person name="Burks J.K."/>
            <person name="Summers M.D."/>
            <person name="Braunagel S.C."/>
        </authorList>
    </citation>
    <scope>FUNCTION</scope>
    <scope>PALMITOYLATION</scope>
    <scope>SUBCELLULAR LOCATION</scope>
</reference>
<reference key="8">
    <citation type="journal article" date="2009" name="Virology">
        <title>AcMNPV AC16 (DA26, BV/ODV-E26) regulates the levels of IE0 and IE1 and binds to both proteins via a domain located within the acidic transcriptional activation domain.</title>
        <authorList>
            <person name="Nie Y."/>
            <person name="Fang M."/>
            <person name="Theilmann D.A."/>
        </authorList>
    </citation>
    <scope>FUNCTION</scope>
    <scope>INTERACTION WITH IE0 AND IE1</scope>
</reference>
<reference key="9">
    <citation type="journal article" date="2009" name="J. Virol.">
        <title>Baculovirus data suggest a common but multifaceted pathway for sorting proteins to the inner nuclear membrane.</title>
        <authorList>
            <person name="Braunagel S.C."/>
            <person name="Cox V."/>
            <person name="Summers M.D."/>
        </authorList>
    </citation>
    <scope>FUNCTION</scope>
    <scope>INTERACTION WITH FP25K AND HOST IMPORTIN ALPHA-16</scope>
    <scope>SUBCELLULAR LOCATION</scope>
</reference>
<dbReference type="EMBL" id="M22619">
    <property type="protein sequence ID" value="AAA69846.1"/>
    <property type="molecule type" value="Genomic_DNA"/>
</dbReference>
<dbReference type="EMBL" id="M18857">
    <property type="protein sequence ID" value="AAA66808.1"/>
    <property type="molecule type" value="Genomic_DNA"/>
</dbReference>
<dbReference type="EMBL" id="M96361">
    <property type="protein sequence ID" value="AAA66786.1"/>
    <property type="molecule type" value="Genomic_DNA"/>
</dbReference>
<dbReference type="EMBL" id="L22858">
    <property type="protein sequence ID" value="AAA66646.1"/>
    <property type="molecule type" value="Genomic_DNA"/>
</dbReference>
<dbReference type="PIR" id="A29891">
    <property type="entry name" value="WMNV29"/>
</dbReference>
<dbReference type="SMR" id="P12827"/>
<dbReference type="KEGG" id="vg:1403848"/>
<dbReference type="OrthoDB" id="12787at10239"/>
<dbReference type="Proteomes" id="UP000008292">
    <property type="component" value="Segment"/>
</dbReference>
<dbReference type="GO" id="GO:0030430">
    <property type="term" value="C:host cell cytoplasm"/>
    <property type="evidence" value="ECO:0007669"/>
    <property type="project" value="UniProtKB-SubCell"/>
</dbReference>
<dbReference type="GO" id="GO:0044201">
    <property type="term" value="C:host cell nuclear inner membrane"/>
    <property type="evidence" value="ECO:0007669"/>
    <property type="project" value="UniProtKB-SubCell"/>
</dbReference>
<dbReference type="GO" id="GO:0016020">
    <property type="term" value="C:membrane"/>
    <property type="evidence" value="ECO:0007669"/>
    <property type="project" value="UniProtKB-KW"/>
</dbReference>
<dbReference type="GO" id="GO:0044423">
    <property type="term" value="C:virion component"/>
    <property type="evidence" value="ECO:0007669"/>
    <property type="project" value="UniProtKB-KW"/>
</dbReference>
<dbReference type="InterPro" id="IPR021286">
    <property type="entry name" value="Baculovirus_E26"/>
</dbReference>
<dbReference type="Pfam" id="PF11050">
    <property type="entry name" value="Viral_env_E26"/>
    <property type="match status" value="1"/>
</dbReference>
<name>E26_NPVAC</name>
<accession>P12827</accession>
<proteinExistence type="evidence at protein level"/>
<comment type="function">
    <text evidence="2 3 4">Plays a role in the sorting of ODV envelope proteins to the host inner nuclear membrane. May facilitate the fusion and release of nucleocapsids into the cytoplasm. Modulates the expression levels of IE0 and IE1.</text>
</comment>
<comment type="subunit">
    <text evidence="1 3 4 5">Interacts with proteins IE0 and IE1. Interacts with protein FP25K. Interacts with host importin alpha-16.</text>
</comment>
<comment type="subcellular location">
    <subcellularLocation>
        <location evidence="2 5">Host nucleus inner membrane</location>
    </subcellularLocation>
    <subcellularLocation>
        <location evidence="5">Virion</location>
    </subcellularLocation>
    <subcellularLocation>
        <location evidence="2 5">Host cytoplasm</location>
    </subcellularLocation>
    <subcellularLocation>
        <location evidence="2">Host nucleus</location>
    </subcellularLocation>
    <text evidence="2">Early in infection, localizes both in the host nucleus and cytoplasm while later in infection localizes in viral-induced microvesicles within the host nucleus.</text>
</comment>
<comment type="PTM">
    <text evidence="2">Palmitoylated.</text>
</comment>
<protein>
    <recommendedName>
        <fullName>Protein E26</fullName>
    </recommendedName>
    <alternativeName>
        <fullName>Protein AC16</fullName>
    </alternativeName>
</protein>
<feature type="chain" id="PRO_0000132857" description="Protein E26">
    <location>
        <begin position="1"/>
        <end position="225"/>
    </location>
</feature>